<sequence>MRIALKIAYDGTKFYGFQRQPDLRTVEGELIKVLKKLGIIEDVKEANFKGASRTDRGVSALGNVIAFNTAKPELAEARILNHHLRDIWILGKAEVPEDFHPRFWAKNKIYRYYLFDEGIDVIKLKACAEAFLGRHDFSNFARLEEFRKPVREINRIDVFSRGRIIVVEIEGKSFLWEMTRRIITALKLCGLGVLSIGDVELMLKEKVDKKLPPAPPENLVLWEVGYEGIKFEVDAYAIEKVKREFLERFRKYLTKSAILEDWLISL</sequence>
<accession>C6A238</accession>
<dbReference type="EC" id="5.4.99.12" evidence="1"/>
<dbReference type="EMBL" id="CP001463">
    <property type="protein sequence ID" value="ACS89683.1"/>
    <property type="molecule type" value="Genomic_DNA"/>
</dbReference>
<dbReference type="RefSeq" id="WP_015848903.1">
    <property type="nucleotide sequence ID" value="NC_012883.1"/>
</dbReference>
<dbReference type="SMR" id="C6A238"/>
<dbReference type="STRING" id="604354.TSIB_0618"/>
<dbReference type="GeneID" id="8095606"/>
<dbReference type="KEGG" id="tsi:TSIB_0618"/>
<dbReference type="eggNOG" id="arCOG04449">
    <property type="taxonomic scope" value="Archaea"/>
</dbReference>
<dbReference type="HOGENOM" id="CLU_014673_0_1_2"/>
<dbReference type="OrthoDB" id="25720at2157"/>
<dbReference type="Proteomes" id="UP000009079">
    <property type="component" value="Chromosome"/>
</dbReference>
<dbReference type="GO" id="GO:0003723">
    <property type="term" value="F:RNA binding"/>
    <property type="evidence" value="ECO:0007669"/>
    <property type="project" value="InterPro"/>
</dbReference>
<dbReference type="GO" id="GO:0160147">
    <property type="term" value="F:tRNA pseudouridine(38-40) synthase activity"/>
    <property type="evidence" value="ECO:0007669"/>
    <property type="project" value="UniProtKB-EC"/>
</dbReference>
<dbReference type="GO" id="GO:0031119">
    <property type="term" value="P:tRNA pseudouridine synthesis"/>
    <property type="evidence" value="ECO:0007669"/>
    <property type="project" value="UniProtKB-UniRule"/>
</dbReference>
<dbReference type="FunFam" id="3.30.70.580:FF:000001">
    <property type="entry name" value="tRNA pseudouridine synthase A"/>
    <property type="match status" value="1"/>
</dbReference>
<dbReference type="Gene3D" id="3.30.70.660">
    <property type="entry name" value="Pseudouridine synthase I, catalytic domain, C-terminal subdomain"/>
    <property type="match status" value="1"/>
</dbReference>
<dbReference type="Gene3D" id="3.30.70.580">
    <property type="entry name" value="Pseudouridine synthase I, catalytic domain, N-terminal subdomain"/>
    <property type="match status" value="1"/>
</dbReference>
<dbReference type="HAMAP" id="MF_00171">
    <property type="entry name" value="TruA"/>
    <property type="match status" value="1"/>
</dbReference>
<dbReference type="InterPro" id="IPR020103">
    <property type="entry name" value="PsdUridine_synth_cat_dom_sf"/>
</dbReference>
<dbReference type="InterPro" id="IPR001406">
    <property type="entry name" value="PsdUridine_synth_TruA"/>
</dbReference>
<dbReference type="InterPro" id="IPR020097">
    <property type="entry name" value="PsdUridine_synth_TruA_a/b_dom"/>
</dbReference>
<dbReference type="InterPro" id="IPR020095">
    <property type="entry name" value="PsdUridine_synth_TruA_C"/>
</dbReference>
<dbReference type="InterPro" id="IPR020094">
    <property type="entry name" value="TruA/RsuA/RluB/E/F_N"/>
</dbReference>
<dbReference type="NCBIfam" id="TIGR00071">
    <property type="entry name" value="hisT_truA"/>
    <property type="match status" value="1"/>
</dbReference>
<dbReference type="PANTHER" id="PTHR11142">
    <property type="entry name" value="PSEUDOURIDYLATE SYNTHASE"/>
    <property type="match status" value="1"/>
</dbReference>
<dbReference type="PANTHER" id="PTHR11142:SF0">
    <property type="entry name" value="TRNA PSEUDOURIDINE SYNTHASE-LIKE 1"/>
    <property type="match status" value="1"/>
</dbReference>
<dbReference type="Pfam" id="PF01416">
    <property type="entry name" value="PseudoU_synth_1"/>
    <property type="match status" value="1"/>
</dbReference>
<dbReference type="PIRSF" id="PIRSF001430">
    <property type="entry name" value="tRNA_psdUrid_synth"/>
    <property type="match status" value="1"/>
</dbReference>
<dbReference type="SUPFAM" id="SSF55120">
    <property type="entry name" value="Pseudouridine synthase"/>
    <property type="match status" value="1"/>
</dbReference>
<keyword id="KW-0413">Isomerase</keyword>
<keyword id="KW-1185">Reference proteome</keyword>
<keyword id="KW-0819">tRNA processing</keyword>
<gene>
    <name evidence="1" type="primary">truA</name>
    <name type="ordered locus">TSIB_0618</name>
</gene>
<reference key="1">
    <citation type="journal article" date="2009" name="Appl. Environ. Microbiol.">
        <title>Metabolic versatility and indigenous origin of the archaeon Thermococcus sibiricus, isolated from a siberian oil reservoir, as revealed by genome analysis.</title>
        <authorList>
            <person name="Mardanov A.V."/>
            <person name="Ravin N.V."/>
            <person name="Svetlitchnyi V.A."/>
            <person name="Beletsky A.V."/>
            <person name="Miroshnichenko M.L."/>
            <person name="Bonch-Osmolovskaya E.A."/>
            <person name="Skryabin K.G."/>
        </authorList>
    </citation>
    <scope>NUCLEOTIDE SEQUENCE [LARGE SCALE GENOMIC DNA]</scope>
    <source>
        <strain>DSM 12597 / MM 739</strain>
    </source>
</reference>
<organism>
    <name type="scientific">Thermococcus sibiricus (strain DSM 12597 / MM 739)</name>
    <dbReference type="NCBI Taxonomy" id="604354"/>
    <lineage>
        <taxon>Archaea</taxon>
        <taxon>Methanobacteriati</taxon>
        <taxon>Methanobacteriota</taxon>
        <taxon>Thermococci</taxon>
        <taxon>Thermococcales</taxon>
        <taxon>Thermococcaceae</taxon>
        <taxon>Thermococcus</taxon>
    </lineage>
</organism>
<feature type="chain" id="PRO_1000203702" description="tRNA pseudouridine synthase A">
    <location>
        <begin position="1"/>
        <end position="266"/>
    </location>
</feature>
<feature type="active site" description="Nucleophile" evidence="1">
    <location>
        <position position="55"/>
    </location>
</feature>
<feature type="binding site" evidence="1">
    <location>
        <position position="110"/>
    </location>
    <ligand>
        <name>substrate</name>
    </ligand>
</feature>
<name>TRUA_THESM</name>
<proteinExistence type="inferred from homology"/>
<protein>
    <recommendedName>
        <fullName evidence="1">tRNA pseudouridine synthase A</fullName>
        <ecNumber evidence="1">5.4.99.12</ecNumber>
    </recommendedName>
    <alternativeName>
        <fullName evidence="1">tRNA pseudouridine(38-40) synthase</fullName>
    </alternativeName>
    <alternativeName>
        <fullName evidence="1">tRNA pseudouridylate synthase I</fullName>
    </alternativeName>
    <alternativeName>
        <fullName evidence="1">tRNA-uridine isomerase I</fullName>
    </alternativeName>
</protein>
<comment type="function">
    <text evidence="1">Formation of pseudouridine at positions 38, 39 and 40 in the anticodon stem and loop of transfer RNAs.</text>
</comment>
<comment type="catalytic activity">
    <reaction evidence="1">
        <text>uridine(38/39/40) in tRNA = pseudouridine(38/39/40) in tRNA</text>
        <dbReference type="Rhea" id="RHEA:22376"/>
        <dbReference type="Rhea" id="RHEA-COMP:10085"/>
        <dbReference type="Rhea" id="RHEA-COMP:10087"/>
        <dbReference type="ChEBI" id="CHEBI:65314"/>
        <dbReference type="ChEBI" id="CHEBI:65315"/>
        <dbReference type="EC" id="5.4.99.12"/>
    </reaction>
</comment>
<comment type="similarity">
    <text evidence="1">Belongs to the tRNA pseudouridine synthase TruA family.</text>
</comment>
<evidence type="ECO:0000255" key="1">
    <source>
        <dbReference type="HAMAP-Rule" id="MF_00171"/>
    </source>
</evidence>